<sequence length="229" mass="24979">MATKIFLASPVISATRTPIVPKAIASRLGTSLAAALAATSVLTMVPVLPAAGEGNQTYKIYYGTAASAANYGGYGGNSDRKTSAEYVYDVPEGWKERLVSKVEKGTNGTDSEFYNPKKKTEKEYLTFLAGFRQLAPRDVILNNLALSDVELQDLIAGADKVVSEERKDETGQVYYLYEIDGVGKHSLITVTCSKNRLYAHFVNAPAPEWNRDHDTLTHLRDSFKTVSSS</sequence>
<accession>P82658</accession>
<accession>E0X9N3</accession>
<accession>F4J2A4</accession>
<accession>Q0WLK8</accession>
<protein>
    <recommendedName>
        <fullName>Thylakoid lumenal 19 kDa protein, chloroplastic</fullName>
    </recommendedName>
    <alternativeName>
        <fullName>P19</fullName>
    </alternativeName>
</protein>
<proteinExistence type="evidence at protein level"/>
<name>TL19_ARATH</name>
<dbReference type="EMBL" id="GQ903575">
    <property type="protein sequence ID" value="ADM35939.1"/>
    <property type="molecule type" value="Genomic_DNA"/>
</dbReference>
<dbReference type="EMBL" id="GQ903576">
    <property type="protein sequence ID" value="ADM35940.1"/>
    <property type="molecule type" value="Genomic_DNA"/>
</dbReference>
<dbReference type="EMBL" id="AL732522">
    <property type="status" value="NOT_ANNOTATED_CDS"/>
    <property type="molecule type" value="Genomic_DNA"/>
</dbReference>
<dbReference type="EMBL" id="CP002686">
    <property type="protein sequence ID" value="AEE80501.1"/>
    <property type="status" value="ALT_SEQ"/>
    <property type="molecule type" value="Genomic_DNA"/>
</dbReference>
<dbReference type="EMBL" id="AK230190">
    <property type="protein sequence ID" value="BAF01999.1"/>
    <property type="molecule type" value="mRNA"/>
</dbReference>
<dbReference type="RefSeq" id="NP_001190172.1">
    <property type="nucleotide sequence ID" value="NM_001203243.2"/>
</dbReference>
<dbReference type="SMR" id="P82658"/>
<dbReference type="FunCoup" id="P82658">
    <property type="interactions" value="18"/>
</dbReference>
<dbReference type="IntAct" id="P82658">
    <property type="interactions" value="1"/>
</dbReference>
<dbReference type="STRING" id="3702.P82658"/>
<dbReference type="PaxDb" id="3702-AT3G63540.1"/>
<dbReference type="ProteomicsDB" id="246447"/>
<dbReference type="GeneID" id="7922413"/>
<dbReference type="KEGG" id="ath:AT3G63540"/>
<dbReference type="Araport" id="AT3G63540"/>
<dbReference type="TAIR" id="AT3G63540"/>
<dbReference type="eggNOG" id="ENOG502QUTY">
    <property type="taxonomic scope" value="Eukaryota"/>
</dbReference>
<dbReference type="HOGENOM" id="CLU_1708934_0_0_1"/>
<dbReference type="InParanoid" id="P82658"/>
<dbReference type="PRO" id="PR:P82658"/>
<dbReference type="Proteomes" id="UP000006548">
    <property type="component" value="Chromosome 3"/>
</dbReference>
<dbReference type="ExpressionAtlas" id="P82658">
    <property type="expression patterns" value="baseline and differential"/>
</dbReference>
<dbReference type="GO" id="GO:0009543">
    <property type="term" value="C:chloroplast thylakoid lumen"/>
    <property type="evidence" value="ECO:0007669"/>
    <property type="project" value="UniProtKB-SubCell"/>
</dbReference>
<dbReference type="GO" id="GO:0019898">
    <property type="term" value="C:extrinsic component of membrane"/>
    <property type="evidence" value="ECO:0007669"/>
    <property type="project" value="InterPro"/>
</dbReference>
<dbReference type="GO" id="GO:0009654">
    <property type="term" value="C:photosystem II oxygen evolving complex"/>
    <property type="evidence" value="ECO:0007669"/>
    <property type="project" value="InterPro"/>
</dbReference>
<dbReference type="GO" id="GO:0005509">
    <property type="term" value="F:calcium ion binding"/>
    <property type="evidence" value="ECO:0007669"/>
    <property type="project" value="InterPro"/>
</dbReference>
<dbReference type="GO" id="GO:0015979">
    <property type="term" value="P:photosynthesis"/>
    <property type="evidence" value="ECO:0007669"/>
    <property type="project" value="InterPro"/>
</dbReference>
<dbReference type="Gene3D" id="3.40.1000.10">
    <property type="entry name" value="Mog1/PsbP, alpha/beta/alpha sandwich"/>
    <property type="match status" value="1"/>
</dbReference>
<dbReference type="InterPro" id="IPR016123">
    <property type="entry name" value="Mog1/PsbP_a/b/a-sand"/>
</dbReference>
<dbReference type="InterPro" id="IPR002683">
    <property type="entry name" value="PsbP_C"/>
</dbReference>
<dbReference type="PANTHER" id="PTHR31407">
    <property type="match status" value="1"/>
</dbReference>
<dbReference type="PANTHER" id="PTHR31407:SF20">
    <property type="entry name" value="THYLAKOID LUMENAL 19 KDA PROTEIN, CHLOROPLASTIC"/>
    <property type="match status" value="1"/>
</dbReference>
<dbReference type="Pfam" id="PF01789">
    <property type="entry name" value="PsbP"/>
    <property type="match status" value="1"/>
</dbReference>
<dbReference type="SUPFAM" id="SSF55724">
    <property type="entry name" value="Mog1p/PsbP-like"/>
    <property type="match status" value="1"/>
</dbReference>
<reference key="1">
    <citation type="journal article" date="2010" name="Plant Mol. Biol.">
        <title>The subtelomeric region of the Arabidopsis thaliana chromosome IIIR contains potential genes and duplicated fragments from other chromosomes.</title>
        <authorList>
            <person name="Wang C.T."/>
            <person name="Ho C.H."/>
            <person name="Hseu M.J."/>
            <person name="Chen C.M."/>
        </authorList>
    </citation>
    <scope>NUCLEOTIDE SEQUENCE [GENOMIC DNA]</scope>
    <source>
        <strain>cv. Columbia</strain>
        <strain>cv. Wassilewskija</strain>
    </source>
</reference>
<reference key="2">
    <citation type="journal article" date="2000" name="Nature">
        <title>Sequence and analysis of chromosome 3 of the plant Arabidopsis thaliana.</title>
        <authorList>
            <person name="Salanoubat M."/>
            <person name="Lemcke K."/>
            <person name="Rieger M."/>
            <person name="Ansorge W."/>
            <person name="Unseld M."/>
            <person name="Fartmann B."/>
            <person name="Valle G."/>
            <person name="Bloecker H."/>
            <person name="Perez-Alonso M."/>
            <person name="Obermaier B."/>
            <person name="Delseny M."/>
            <person name="Boutry M."/>
            <person name="Grivell L.A."/>
            <person name="Mache R."/>
            <person name="Puigdomenech P."/>
            <person name="De Simone V."/>
            <person name="Choisne N."/>
            <person name="Artiguenave F."/>
            <person name="Robert C."/>
            <person name="Brottier P."/>
            <person name="Wincker P."/>
            <person name="Cattolico L."/>
            <person name="Weissenbach J."/>
            <person name="Saurin W."/>
            <person name="Quetier F."/>
            <person name="Schaefer M."/>
            <person name="Mueller-Auer S."/>
            <person name="Gabel C."/>
            <person name="Fuchs M."/>
            <person name="Benes V."/>
            <person name="Wurmbach E."/>
            <person name="Drzonek H."/>
            <person name="Erfle H."/>
            <person name="Jordan N."/>
            <person name="Bangert S."/>
            <person name="Wiedelmann R."/>
            <person name="Kranz H."/>
            <person name="Voss H."/>
            <person name="Holland R."/>
            <person name="Brandt P."/>
            <person name="Nyakatura G."/>
            <person name="Vezzi A."/>
            <person name="D'Angelo M."/>
            <person name="Pallavicini A."/>
            <person name="Toppo S."/>
            <person name="Simionati B."/>
            <person name="Conrad A."/>
            <person name="Hornischer K."/>
            <person name="Kauer G."/>
            <person name="Loehnert T.-H."/>
            <person name="Nordsiek G."/>
            <person name="Reichelt J."/>
            <person name="Scharfe M."/>
            <person name="Schoen O."/>
            <person name="Bargues M."/>
            <person name="Terol J."/>
            <person name="Climent J."/>
            <person name="Navarro P."/>
            <person name="Collado C."/>
            <person name="Perez-Perez A."/>
            <person name="Ottenwaelder B."/>
            <person name="Duchemin D."/>
            <person name="Cooke R."/>
            <person name="Laudie M."/>
            <person name="Berger-Llauro C."/>
            <person name="Purnelle B."/>
            <person name="Masuy D."/>
            <person name="de Haan M."/>
            <person name="Maarse A.C."/>
            <person name="Alcaraz J.-P."/>
            <person name="Cottet A."/>
            <person name="Casacuberta E."/>
            <person name="Monfort A."/>
            <person name="Argiriou A."/>
            <person name="Flores M."/>
            <person name="Liguori R."/>
            <person name="Vitale D."/>
            <person name="Mannhaupt G."/>
            <person name="Haase D."/>
            <person name="Schoof H."/>
            <person name="Rudd S."/>
            <person name="Zaccaria P."/>
            <person name="Mewes H.-W."/>
            <person name="Mayer K.F.X."/>
            <person name="Kaul S."/>
            <person name="Town C.D."/>
            <person name="Koo H.L."/>
            <person name="Tallon L.J."/>
            <person name="Jenkins J."/>
            <person name="Rooney T."/>
            <person name="Rizzo M."/>
            <person name="Walts A."/>
            <person name="Utterback T."/>
            <person name="Fujii C.Y."/>
            <person name="Shea T.P."/>
            <person name="Creasy T.H."/>
            <person name="Haas B."/>
            <person name="Maiti R."/>
            <person name="Wu D."/>
            <person name="Peterson J."/>
            <person name="Van Aken S."/>
            <person name="Pai G."/>
            <person name="Militscher J."/>
            <person name="Sellers P."/>
            <person name="Gill J.E."/>
            <person name="Feldblyum T.V."/>
            <person name="Preuss D."/>
            <person name="Lin X."/>
            <person name="Nierman W.C."/>
            <person name="Salzberg S.L."/>
            <person name="White O."/>
            <person name="Venter J.C."/>
            <person name="Fraser C.M."/>
            <person name="Kaneko T."/>
            <person name="Nakamura Y."/>
            <person name="Sato S."/>
            <person name="Kato T."/>
            <person name="Asamizu E."/>
            <person name="Sasamoto S."/>
            <person name="Kimura T."/>
            <person name="Idesawa K."/>
            <person name="Kawashima K."/>
            <person name="Kishida Y."/>
            <person name="Kiyokawa C."/>
            <person name="Kohara M."/>
            <person name="Matsumoto M."/>
            <person name="Matsuno A."/>
            <person name="Muraki A."/>
            <person name="Nakayama S."/>
            <person name="Nakazaki N."/>
            <person name="Shinpo S."/>
            <person name="Takeuchi C."/>
            <person name="Wada T."/>
            <person name="Watanabe A."/>
            <person name="Yamada M."/>
            <person name="Yasuda M."/>
            <person name="Tabata S."/>
        </authorList>
    </citation>
    <scope>NUCLEOTIDE SEQUENCE [LARGE SCALE GENOMIC DNA] OF 92-229</scope>
    <source>
        <strain>cv. Columbia</strain>
    </source>
</reference>
<reference key="3">
    <citation type="journal article" date="2017" name="Plant J.">
        <title>Araport11: a complete reannotation of the Arabidopsis thaliana reference genome.</title>
        <authorList>
            <person name="Cheng C.Y."/>
            <person name="Krishnakumar V."/>
            <person name="Chan A.P."/>
            <person name="Thibaud-Nissen F."/>
            <person name="Schobel S."/>
            <person name="Town C.D."/>
        </authorList>
    </citation>
    <scope>GENOME REANNOTATION</scope>
    <scope>SEQUENCE REVISION</scope>
    <source>
        <strain>cv. Columbia</strain>
    </source>
</reference>
<reference key="4">
    <citation type="submission" date="2006-07" db="EMBL/GenBank/DDBJ databases">
        <title>Large-scale analysis of RIKEN Arabidopsis full-length (RAFL) cDNAs.</title>
        <authorList>
            <person name="Totoki Y."/>
            <person name="Seki M."/>
            <person name="Ishida J."/>
            <person name="Nakajima M."/>
            <person name="Enju A."/>
            <person name="Kamiya A."/>
            <person name="Narusaka M."/>
            <person name="Shin-i T."/>
            <person name="Nakagawa M."/>
            <person name="Sakamoto N."/>
            <person name="Oishi K."/>
            <person name="Kohara Y."/>
            <person name="Kobayashi M."/>
            <person name="Toyoda A."/>
            <person name="Sakaki Y."/>
            <person name="Sakurai T."/>
            <person name="Iida K."/>
            <person name="Akiyama K."/>
            <person name="Satou M."/>
            <person name="Toyoda T."/>
            <person name="Konagaya A."/>
            <person name="Carninci P."/>
            <person name="Kawai J."/>
            <person name="Hayashizaki Y."/>
            <person name="Shinozaki K."/>
        </authorList>
    </citation>
    <scope>NUCLEOTIDE SEQUENCE [LARGE SCALE MRNA]</scope>
    <source>
        <strain>cv. Columbia</strain>
    </source>
</reference>
<reference key="5">
    <citation type="journal article" date="2002" name="J. Biol. Chem.">
        <title>Proteome map of the chloroplast lumen of Arabidopsis thaliana.</title>
        <authorList>
            <person name="Schubert M."/>
            <person name="Petersson U.A."/>
            <person name="Haas B.J."/>
            <person name="Funk C."/>
            <person name="Schroeder W.P."/>
            <person name="Kieselbach T."/>
        </authorList>
    </citation>
    <scope>PROTEIN SEQUENCE OF 53-73</scope>
    <scope>SUBCELLULAR LOCATION</scope>
    <source>
        <strain>cv. Columbia</strain>
    </source>
</reference>
<gene>
    <name type="ordered locus">At3g63540</name>
    <name type="ORF">TEL3S</name>
</gene>
<evidence type="ECO:0000255" key="1"/>
<evidence type="ECO:0000269" key="2">
    <source>
    </source>
</evidence>
<evidence type="ECO:0000305" key="3"/>
<comment type="subcellular location">
    <subcellularLocation>
        <location evidence="2">Plastid</location>
        <location evidence="2">Chloroplast thylakoid lumen</location>
    </subcellularLocation>
</comment>
<comment type="sequence caution" evidence="3">
    <conflict type="erroneous gene model prediction">
        <sequence resource="EMBL-CDS" id="AEE80501"/>
    </conflict>
</comment>
<feature type="transit peptide" description="Chloroplast" evidence="1">
    <location>
        <begin position="1"/>
        <end status="unknown"/>
    </location>
</feature>
<feature type="transit peptide" description="Thylakoid" evidence="2">
    <location>
        <begin status="unknown"/>
        <end position="52"/>
    </location>
</feature>
<feature type="chain" id="PRO_0000072557" description="Thylakoid lumenal 19 kDa protein, chloroplastic">
    <location>
        <begin position="53"/>
        <end position="229"/>
    </location>
</feature>
<feature type="sequence conflict" description="In Ref. 3; AEE80501 and 4; BAF01999." evidence="3" ref="3 4">
    <original>R</original>
    <variation>K</variation>
    <location>
        <position position="196"/>
    </location>
</feature>
<organism>
    <name type="scientific">Arabidopsis thaliana</name>
    <name type="common">Mouse-ear cress</name>
    <dbReference type="NCBI Taxonomy" id="3702"/>
    <lineage>
        <taxon>Eukaryota</taxon>
        <taxon>Viridiplantae</taxon>
        <taxon>Streptophyta</taxon>
        <taxon>Embryophyta</taxon>
        <taxon>Tracheophyta</taxon>
        <taxon>Spermatophyta</taxon>
        <taxon>Magnoliopsida</taxon>
        <taxon>eudicotyledons</taxon>
        <taxon>Gunneridae</taxon>
        <taxon>Pentapetalae</taxon>
        <taxon>rosids</taxon>
        <taxon>malvids</taxon>
        <taxon>Brassicales</taxon>
        <taxon>Brassicaceae</taxon>
        <taxon>Camelineae</taxon>
        <taxon>Arabidopsis</taxon>
    </lineage>
</organism>
<keyword id="KW-0150">Chloroplast</keyword>
<keyword id="KW-0903">Direct protein sequencing</keyword>
<keyword id="KW-0934">Plastid</keyword>
<keyword id="KW-1185">Reference proteome</keyword>
<keyword id="KW-0793">Thylakoid</keyword>
<keyword id="KW-0809">Transit peptide</keyword>